<name>ACDH_ECO57</name>
<dbReference type="EC" id="1.2.1.10" evidence="1"/>
<dbReference type="EMBL" id="AE005174">
    <property type="protein sequence ID" value="AAG54702.1"/>
    <property type="molecule type" value="Genomic_DNA"/>
</dbReference>
<dbReference type="EMBL" id="BA000007">
    <property type="protein sequence ID" value="BAB33829.1"/>
    <property type="molecule type" value="Genomic_DNA"/>
</dbReference>
<dbReference type="PIR" id="B85530">
    <property type="entry name" value="B85530"/>
</dbReference>
<dbReference type="PIR" id="F90679">
    <property type="entry name" value="F90679"/>
</dbReference>
<dbReference type="RefSeq" id="NP_308433.1">
    <property type="nucleotide sequence ID" value="NC_002695.1"/>
</dbReference>
<dbReference type="RefSeq" id="WP_000044300.1">
    <property type="nucleotide sequence ID" value="NZ_VOAI01000005.1"/>
</dbReference>
<dbReference type="SMR" id="Q8X5J9"/>
<dbReference type="STRING" id="155864.Z0450"/>
<dbReference type="GeneID" id="914508"/>
<dbReference type="KEGG" id="ece:Z0450"/>
<dbReference type="KEGG" id="ecs:ECs_0406"/>
<dbReference type="PATRIC" id="fig|386585.9.peg.501"/>
<dbReference type="eggNOG" id="COG4569">
    <property type="taxonomic scope" value="Bacteria"/>
</dbReference>
<dbReference type="HOGENOM" id="CLU_062208_0_0_6"/>
<dbReference type="OMA" id="QGNVNMV"/>
<dbReference type="UniPathway" id="UPA00714"/>
<dbReference type="Proteomes" id="UP000000558">
    <property type="component" value="Chromosome"/>
</dbReference>
<dbReference type="Proteomes" id="UP000002519">
    <property type="component" value="Chromosome"/>
</dbReference>
<dbReference type="GO" id="GO:0008774">
    <property type="term" value="F:acetaldehyde dehydrogenase (acetylating) activity"/>
    <property type="evidence" value="ECO:0007669"/>
    <property type="project" value="UniProtKB-UniRule"/>
</dbReference>
<dbReference type="GO" id="GO:0051287">
    <property type="term" value="F:NAD binding"/>
    <property type="evidence" value="ECO:0007669"/>
    <property type="project" value="UniProtKB-UniRule"/>
</dbReference>
<dbReference type="GO" id="GO:0019380">
    <property type="term" value="P:3-phenylpropionate catabolic process"/>
    <property type="evidence" value="ECO:0007669"/>
    <property type="project" value="UniProtKB-UniRule"/>
</dbReference>
<dbReference type="CDD" id="cd23933">
    <property type="entry name" value="ALDH_C"/>
    <property type="match status" value="1"/>
</dbReference>
<dbReference type="FunFam" id="3.30.360.10:FF:000021">
    <property type="entry name" value="Acetaldehyde dehydrogenase"/>
    <property type="match status" value="1"/>
</dbReference>
<dbReference type="Gene3D" id="3.30.360.10">
    <property type="entry name" value="Dihydrodipicolinate Reductase, domain 2"/>
    <property type="match status" value="1"/>
</dbReference>
<dbReference type="Gene3D" id="3.40.50.720">
    <property type="entry name" value="NAD(P)-binding Rossmann-like Domain"/>
    <property type="match status" value="1"/>
</dbReference>
<dbReference type="HAMAP" id="MF_01657">
    <property type="entry name" value="Ac_ald_DH_ac"/>
    <property type="match status" value="1"/>
</dbReference>
<dbReference type="InterPro" id="IPR003361">
    <property type="entry name" value="Acetaldehyde_dehydrogenase"/>
</dbReference>
<dbReference type="InterPro" id="IPR015426">
    <property type="entry name" value="Acetylaldehyde_DH_C"/>
</dbReference>
<dbReference type="InterPro" id="IPR036291">
    <property type="entry name" value="NAD(P)-bd_dom_sf"/>
</dbReference>
<dbReference type="InterPro" id="IPR000534">
    <property type="entry name" value="Semialdehyde_DH_NAD-bd"/>
</dbReference>
<dbReference type="NCBIfam" id="TIGR03215">
    <property type="entry name" value="ac_ald_DH_ac"/>
    <property type="match status" value="1"/>
</dbReference>
<dbReference type="NCBIfam" id="NF006157">
    <property type="entry name" value="PRK08300.1"/>
    <property type="match status" value="1"/>
</dbReference>
<dbReference type="Pfam" id="PF09290">
    <property type="entry name" value="AcetDehyd-dimer"/>
    <property type="match status" value="1"/>
</dbReference>
<dbReference type="Pfam" id="PF01118">
    <property type="entry name" value="Semialdhyde_dh"/>
    <property type="match status" value="1"/>
</dbReference>
<dbReference type="PIRSF" id="PIRSF015689">
    <property type="entry name" value="Actaldh_dh_actl"/>
    <property type="match status" value="1"/>
</dbReference>
<dbReference type="SMART" id="SM00859">
    <property type="entry name" value="Semialdhyde_dh"/>
    <property type="match status" value="1"/>
</dbReference>
<dbReference type="SUPFAM" id="SSF55347">
    <property type="entry name" value="Glyceraldehyde-3-phosphate dehydrogenase-like, C-terminal domain"/>
    <property type="match status" value="1"/>
</dbReference>
<dbReference type="SUPFAM" id="SSF51735">
    <property type="entry name" value="NAD(P)-binding Rossmann-fold domains"/>
    <property type="match status" value="1"/>
</dbReference>
<feature type="chain" id="PRO_0000337980" description="Acetaldehyde dehydrogenase">
    <location>
        <begin position="1"/>
        <end position="316"/>
    </location>
</feature>
<feature type="active site" description="Acyl-thioester intermediate" evidence="1">
    <location>
        <position position="131"/>
    </location>
</feature>
<feature type="binding site" evidence="1">
    <location>
        <begin position="11"/>
        <end position="14"/>
    </location>
    <ligand>
        <name>NAD(+)</name>
        <dbReference type="ChEBI" id="CHEBI:57540"/>
    </ligand>
</feature>
<feature type="binding site" evidence="1">
    <location>
        <begin position="162"/>
        <end position="170"/>
    </location>
    <ligand>
        <name>NAD(+)</name>
        <dbReference type="ChEBI" id="CHEBI:57540"/>
    </ligand>
</feature>
<feature type="binding site" evidence="1">
    <location>
        <position position="289"/>
    </location>
    <ligand>
        <name>NAD(+)</name>
        <dbReference type="ChEBI" id="CHEBI:57540"/>
    </ligand>
</feature>
<keyword id="KW-0058">Aromatic hydrocarbons catabolism</keyword>
<keyword id="KW-0520">NAD</keyword>
<keyword id="KW-0560">Oxidoreductase</keyword>
<keyword id="KW-1185">Reference proteome</keyword>
<protein>
    <recommendedName>
        <fullName evidence="1">Acetaldehyde dehydrogenase</fullName>
        <ecNumber evidence="1">1.2.1.10</ecNumber>
    </recommendedName>
    <alternativeName>
        <fullName evidence="1">Acetaldehyde dehydrogenase [acetylating]</fullName>
    </alternativeName>
</protein>
<organism>
    <name type="scientific">Escherichia coli O157:H7</name>
    <dbReference type="NCBI Taxonomy" id="83334"/>
    <lineage>
        <taxon>Bacteria</taxon>
        <taxon>Pseudomonadati</taxon>
        <taxon>Pseudomonadota</taxon>
        <taxon>Gammaproteobacteria</taxon>
        <taxon>Enterobacterales</taxon>
        <taxon>Enterobacteriaceae</taxon>
        <taxon>Escherichia</taxon>
    </lineage>
</organism>
<accession>Q8X5J9</accession>
<accession>Q7AH50</accession>
<gene>
    <name evidence="1" type="primary">mhpF</name>
    <name type="ordered locus">Z0450</name>
    <name type="ordered locus">ECs0406</name>
</gene>
<evidence type="ECO:0000255" key="1">
    <source>
        <dbReference type="HAMAP-Rule" id="MF_01657"/>
    </source>
</evidence>
<reference key="1">
    <citation type="journal article" date="2001" name="Nature">
        <title>Genome sequence of enterohaemorrhagic Escherichia coli O157:H7.</title>
        <authorList>
            <person name="Perna N.T."/>
            <person name="Plunkett G. III"/>
            <person name="Burland V."/>
            <person name="Mau B."/>
            <person name="Glasner J.D."/>
            <person name="Rose D.J."/>
            <person name="Mayhew G.F."/>
            <person name="Evans P.S."/>
            <person name="Gregor J."/>
            <person name="Kirkpatrick H.A."/>
            <person name="Posfai G."/>
            <person name="Hackett J."/>
            <person name="Klink S."/>
            <person name="Boutin A."/>
            <person name="Shao Y."/>
            <person name="Miller L."/>
            <person name="Grotbeck E.J."/>
            <person name="Davis N.W."/>
            <person name="Lim A."/>
            <person name="Dimalanta E.T."/>
            <person name="Potamousis K."/>
            <person name="Apodaca J."/>
            <person name="Anantharaman T.S."/>
            <person name="Lin J."/>
            <person name="Yen G."/>
            <person name="Schwartz D.C."/>
            <person name="Welch R.A."/>
            <person name="Blattner F.R."/>
        </authorList>
    </citation>
    <scope>NUCLEOTIDE SEQUENCE [LARGE SCALE GENOMIC DNA]</scope>
    <source>
        <strain>O157:H7 / EDL933 / ATCC 700927 / EHEC</strain>
    </source>
</reference>
<reference key="2">
    <citation type="journal article" date="2001" name="DNA Res.">
        <title>Complete genome sequence of enterohemorrhagic Escherichia coli O157:H7 and genomic comparison with a laboratory strain K-12.</title>
        <authorList>
            <person name="Hayashi T."/>
            <person name="Makino K."/>
            <person name="Ohnishi M."/>
            <person name="Kurokawa K."/>
            <person name="Ishii K."/>
            <person name="Yokoyama K."/>
            <person name="Han C.-G."/>
            <person name="Ohtsubo E."/>
            <person name="Nakayama K."/>
            <person name="Murata T."/>
            <person name="Tanaka M."/>
            <person name="Tobe T."/>
            <person name="Iida T."/>
            <person name="Takami H."/>
            <person name="Honda T."/>
            <person name="Sasakawa C."/>
            <person name="Ogasawara N."/>
            <person name="Yasunaga T."/>
            <person name="Kuhara S."/>
            <person name="Shiba T."/>
            <person name="Hattori M."/>
            <person name="Shinagawa H."/>
        </authorList>
    </citation>
    <scope>NUCLEOTIDE SEQUENCE [LARGE SCALE GENOMIC DNA]</scope>
    <source>
        <strain>O157:H7 / Sakai / RIMD 0509952 / EHEC</strain>
    </source>
</reference>
<comment type="function">
    <text evidence="1">Catalyzes the conversion of acetaldehyde to acetyl-CoA, using NAD(+) and coenzyme A. Is the final enzyme in the meta-cleavage pathway for the degradation of aromatic compounds.</text>
</comment>
<comment type="catalytic activity">
    <reaction evidence="1">
        <text>acetaldehyde + NAD(+) + CoA = acetyl-CoA + NADH + H(+)</text>
        <dbReference type="Rhea" id="RHEA:23288"/>
        <dbReference type="ChEBI" id="CHEBI:15343"/>
        <dbReference type="ChEBI" id="CHEBI:15378"/>
        <dbReference type="ChEBI" id="CHEBI:57287"/>
        <dbReference type="ChEBI" id="CHEBI:57288"/>
        <dbReference type="ChEBI" id="CHEBI:57540"/>
        <dbReference type="ChEBI" id="CHEBI:57945"/>
        <dbReference type="EC" id="1.2.1.10"/>
    </reaction>
</comment>
<comment type="pathway">
    <text evidence="1">Aromatic compound metabolism; 3-phenylpropanoate degradation.</text>
</comment>
<comment type="subunit">
    <text evidence="1">Interacts with MhpE.</text>
</comment>
<comment type="similarity">
    <text evidence="1">Belongs to the acetaldehyde dehydrogenase family.</text>
</comment>
<proteinExistence type="inferred from homology"/>
<sequence length="316" mass="33587">MSKRKVAIIGSGNIGTDLMIKILRHDQHLEMAVMVGIDPQSDGLARARRMGVATTHEGVIGLMNMPEFADIDIVFDATSAGAHVKNDAALREAKPDIRLIDLTPAAIGPYCVPVVNLEENVDQLNVNMVTCGGQATIPMVAAVSRVVRVHYAEIIASIASKSAGPGTRANIDEFTETTSRAIEVVGGAAKGKAIIVLNPAEPPLMMRDTVYVLSDEASQDDIEASINEMAEAVQAYVPGYRLKQRVQFEVIPQDKPVNLPGVGQFSGLKTAVWLEVEGAAHYLPAYAGNLDIMTSSALATAEKMAQSLARKAGEAA</sequence>